<evidence type="ECO:0000255" key="1">
    <source>
        <dbReference type="HAMAP-Rule" id="MF_00054"/>
    </source>
</evidence>
<dbReference type="EMBL" id="CP000509">
    <property type="protein sequence ID" value="ABL83421.1"/>
    <property type="molecule type" value="Genomic_DNA"/>
</dbReference>
<dbReference type="RefSeq" id="WP_011757351.1">
    <property type="nucleotide sequence ID" value="NC_008699.1"/>
</dbReference>
<dbReference type="SMR" id="A1SNN6"/>
<dbReference type="STRING" id="196162.Noca_3923"/>
<dbReference type="KEGG" id="nca:Noca_3923"/>
<dbReference type="eggNOG" id="COG0480">
    <property type="taxonomic scope" value="Bacteria"/>
</dbReference>
<dbReference type="HOGENOM" id="CLU_002794_4_1_11"/>
<dbReference type="OrthoDB" id="9801472at2"/>
<dbReference type="Proteomes" id="UP000000640">
    <property type="component" value="Chromosome"/>
</dbReference>
<dbReference type="GO" id="GO:0005737">
    <property type="term" value="C:cytoplasm"/>
    <property type="evidence" value="ECO:0007669"/>
    <property type="project" value="UniProtKB-SubCell"/>
</dbReference>
<dbReference type="GO" id="GO:0005525">
    <property type="term" value="F:GTP binding"/>
    <property type="evidence" value="ECO:0007669"/>
    <property type="project" value="UniProtKB-UniRule"/>
</dbReference>
<dbReference type="GO" id="GO:0003924">
    <property type="term" value="F:GTPase activity"/>
    <property type="evidence" value="ECO:0007669"/>
    <property type="project" value="InterPro"/>
</dbReference>
<dbReference type="GO" id="GO:0003746">
    <property type="term" value="F:translation elongation factor activity"/>
    <property type="evidence" value="ECO:0007669"/>
    <property type="project" value="UniProtKB-UniRule"/>
</dbReference>
<dbReference type="GO" id="GO:0032790">
    <property type="term" value="P:ribosome disassembly"/>
    <property type="evidence" value="ECO:0007669"/>
    <property type="project" value="TreeGrafter"/>
</dbReference>
<dbReference type="CDD" id="cd01886">
    <property type="entry name" value="EF-G"/>
    <property type="match status" value="1"/>
</dbReference>
<dbReference type="CDD" id="cd16262">
    <property type="entry name" value="EFG_III"/>
    <property type="match status" value="1"/>
</dbReference>
<dbReference type="CDD" id="cd01434">
    <property type="entry name" value="EFG_mtEFG1_IV"/>
    <property type="match status" value="1"/>
</dbReference>
<dbReference type="CDD" id="cd03713">
    <property type="entry name" value="EFG_mtEFG_C"/>
    <property type="match status" value="1"/>
</dbReference>
<dbReference type="CDD" id="cd04088">
    <property type="entry name" value="EFG_mtEFG_II"/>
    <property type="match status" value="1"/>
</dbReference>
<dbReference type="FunFam" id="2.40.30.10:FF:000006">
    <property type="entry name" value="Elongation factor G"/>
    <property type="match status" value="1"/>
</dbReference>
<dbReference type="FunFam" id="3.30.230.10:FF:000003">
    <property type="entry name" value="Elongation factor G"/>
    <property type="match status" value="1"/>
</dbReference>
<dbReference type="FunFam" id="3.30.70.240:FF:000001">
    <property type="entry name" value="Elongation factor G"/>
    <property type="match status" value="1"/>
</dbReference>
<dbReference type="FunFam" id="3.30.70.870:FF:000001">
    <property type="entry name" value="Elongation factor G"/>
    <property type="match status" value="1"/>
</dbReference>
<dbReference type="FunFam" id="3.40.50.300:FF:000029">
    <property type="entry name" value="Elongation factor G"/>
    <property type="match status" value="1"/>
</dbReference>
<dbReference type="Gene3D" id="3.30.230.10">
    <property type="match status" value="1"/>
</dbReference>
<dbReference type="Gene3D" id="3.30.70.240">
    <property type="match status" value="1"/>
</dbReference>
<dbReference type="Gene3D" id="3.30.70.870">
    <property type="entry name" value="Elongation Factor G (Translational Gtpase), domain 3"/>
    <property type="match status" value="1"/>
</dbReference>
<dbReference type="Gene3D" id="3.40.50.300">
    <property type="entry name" value="P-loop containing nucleotide triphosphate hydrolases"/>
    <property type="match status" value="1"/>
</dbReference>
<dbReference type="Gene3D" id="2.40.30.10">
    <property type="entry name" value="Translation factors"/>
    <property type="match status" value="1"/>
</dbReference>
<dbReference type="HAMAP" id="MF_00054_B">
    <property type="entry name" value="EF_G_EF_2_B"/>
    <property type="match status" value="1"/>
</dbReference>
<dbReference type="InterPro" id="IPR053905">
    <property type="entry name" value="EF-G-like_DII"/>
</dbReference>
<dbReference type="InterPro" id="IPR041095">
    <property type="entry name" value="EFG_II"/>
</dbReference>
<dbReference type="InterPro" id="IPR009022">
    <property type="entry name" value="EFG_III"/>
</dbReference>
<dbReference type="InterPro" id="IPR035647">
    <property type="entry name" value="EFG_III/V"/>
</dbReference>
<dbReference type="InterPro" id="IPR047872">
    <property type="entry name" value="EFG_IV"/>
</dbReference>
<dbReference type="InterPro" id="IPR035649">
    <property type="entry name" value="EFG_V"/>
</dbReference>
<dbReference type="InterPro" id="IPR000640">
    <property type="entry name" value="EFG_V-like"/>
</dbReference>
<dbReference type="InterPro" id="IPR031157">
    <property type="entry name" value="G_TR_CS"/>
</dbReference>
<dbReference type="InterPro" id="IPR027417">
    <property type="entry name" value="P-loop_NTPase"/>
</dbReference>
<dbReference type="InterPro" id="IPR020568">
    <property type="entry name" value="Ribosomal_Su5_D2-typ_SF"/>
</dbReference>
<dbReference type="InterPro" id="IPR014721">
    <property type="entry name" value="Ribsml_uS5_D2-typ_fold_subgr"/>
</dbReference>
<dbReference type="InterPro" id="IPR005225">
    <property type="entry name" value="Small_GTP-bd"/>
</dbReference>
<dbReference type="InterPro" id="IPR000795">
    <property type="entry name" value="T_Tr_GTP-bd_dom"/>
</dbReference>
<dbReference type="InterPro" id="IPR009000">
    <property type="entry name" value="Transl_B-barrel_sf"/>
</dbReference>
<dbReference type="InterPro" id="IPR004540">
    <property type="entry name" value="Transl_elong_EFG/EF2"/>
</dbReference>
<dbReference type="InterPro" id="IPR005517">
    <property type="entry name" value="Transl_elong_EFG/EF2_IV"/>
</dbReference>
<dbReference type="NCBIfam" id="TIGR00484">
    <property type="entry name" value="EF-G"/>
    <property type="match status" value="1"/>
</dbReference>
<dbReference type="NCBIfam" id="NF009379">
    <property type="entry name" value="PRK12740.1-3"/>
    <property type="match status" value="1"/>
</dbReference>
<dbReference type="NCBIfam" id="NF009381">
    <property type="entry name" value="PRK12740.1-5"/>
    <property type="match status" value="1"/>
</dbReference>
<dbReference type="NCBIfam" id="TIGR00231">
    <property type="entry name" value="small_GTP"/>
    <property type="match status" value="1"/>
</dbReference>
<dbReference type="PANTHER" id="PTHR43261:SF1">
    <property type="entry name" value="RIBOSOME-RELEASING FACTOR 2, MITOCHONDRIAL"/>
    <property type="match status" value="1"/>
</dbReference>
<dbReference type="PANTHER" id="PTHR43261">
    <property type="entry name" value="TRANSLATION ELONGATION FACTOR G-RELATED"/>
    <property type="match status" value="1"/>
</dbReference>
<dbReference type="Pfam" id="PF22042">
    <property type="entry name" value="EF-G_D2"/>
    <property type="match status" value="1"/>
</dbReference>
<dbReference type="Pfam" id="PF00679">
    <property type="entry name" value="EFG_C"/>
    <property type="match status" value="1"/>
</dbReference>
<dbReference type="Pfam" id="PF14492">
    <property type="entry name" value="EFG_III"/>
    <property type="match status" value="1"/>
</dbReference>
<dbReference type="Pfam" id="PF03764">
    <property type="entry name" value="EFG_IV"/>
    <property type="match status" value="1"/>
</dbReference>
<dbReference type="Pfam" id="PF00009">
    <property type="entry name" value="GTP_EFTU"/>
    <property type="match status" value="1"/>
</dbReference>
<dbReference type="PRINTS" id="PR00315">
    <property type="entry name" value="ELONGATNFCT"/>
</dbReference>
<dbReference type="SMART" id="SM00838">
    <property type="entry name" value="EFG_C"/>
    <property type="match status" value="1"/>
</dbReference>
<dbReference type="SMART" id="SM00889">
    <property type="entry name" value="EFG_IV"/>
    <property type="match status" value="1"/>
</dbReference>
<dbReference type="SUPFAM" id="SSF54980">
    <property type="entry name" value="EF-G C-terminal domain-like"/>
    <property type="match status" value="2"/>
</dbReference>
<dbReference type="SUPFAM" id="SSF52540">
    <property type="entry name" value="P-loop containing nucleoside triphosphate hydrolases"/>
    <property type="match status" value="1"/>
</dbReference>
<dbReference type="SUPFAM" id="SSF54211">
    <property type="entry name" value="Ribosomal protein S5 domain 2-like"/>
    <property type="match status" value="1"/>
</dbReference>
<dbReference type="SUPFAM" id="SSF50447">
    <property type="entry name" value="Translation proteins"/>
    <property type="match status" value="1"/>
</dbReference>
<dbReference type="PROSITE" id="PS00301">
    <property type="entry name" value="G_TR_1"/>
    <property type="match status" value="1"/>
</dbReference>
<dbReference type="PROSITE" id="PS51722">
    <property type="entry name" value="G_TR_2"/>
    <property type="match status" value="1"/>
</dbReference>
<proteinExistence type="inferred from homology"/>
<keyword id="KW-0963">Cytoplasm</keyword>
<keyword id="KW-0251">Elongation factor</keyword>
<keyword id="KW-0342">GTP-binding</keyword>
<keyword id="KW-0547">Nucleotide-binding</keyword>
<keyword id="KW-0648">Protein biosynthesis</keyword>
<keyword id="KW-1185">Reference proteome</keyword>
<reference key="1">
    <citation type="submission" date="2006-12" db="EMBL/GenBank/DDBJ databases">
        <title>Complete sequence of chromosome 1 of Nocardioides sp. JS614.</title>
        <authorList>
            <person name="Copeland A."/>
            <person name="Lucas S."/>
            <person name="Lapidus A."/>
            <person name="Barry K."/>
            <person name="Detter J.C."/>
            <person name="Glavina del Rio T."/>
            <person name="Hammon N."/>
            <person name="Israni S."/>
            <person name="Dalin E."/>
            <person name="Tice H."/>
            <person name="Pitluck S."/>
            <person name="Thompson L.S."/>
            <person name="Brettin T."/>
            <person name="Bruce D."/>
            <person name="Han C."/>
            <person name="Tapia R."/>
            <person name="Schmutz J."/>
            <person name="Larimer F."/>
            <person name="Land M."/>
            <person name="Hauser L."/>
            <person name="Kyrpides N."/>
            <person name="Kim E."/>
            <person name="Mattes T."/>
            <person name="Gossett J."/>
            <person name="Richardson P."/>
        </authorList>
    </citation>
    <scope>NUCLEOTIDE SEQUENCE [LARGE SCALE GENOMIC DNA]</scope>
    <source>
        <strain>ATCC BAA-499 / JS614</strain>
    </source>
</reference>
<gene>
    <name evidence="1" type="primary">fusA</name>
    <name type="ordered locus">Noca_3923</name>
</gene>
<name>EFG_NOCSJ</name>
<protein>
    <recommendedName>
        <fullName evidence="1">Elongation factor G</fullName>
        <shortName evidence="1">EF-G</shortName>
    </recommendedName>
</protein>
<sequence>MAVDITTDLNKVRNIGIMAHIDAGKTTTTERILFYTGITYKIGEVHEGAATMDWMEQEQERGITITSAATTCWWKDHQINIIDTPGHVDFTAEVERSLRVLDGAVAVFDGVAGVEPQTMTVWRQANKYAVPRMCFVNKLDRTGADFFRCVDMMVERLNSTPLVLQLPIGAESDFLGVVDLVGMRALTWRGETKMGEDYEVEEIPAELAEQAAEYREKLLETLSEADDDVMEKYLEGEDFTVEELEAAIRRATLADKVNPVLCGTAFKNKGVQPLLDAVVKFLPSPLDIGEIIGHSVKDENEKVSRKPADSEPFSGLAYKIASDPHLGKLIYIRVYSGKLEAGSTVVNSVNGRKERIGKVYQMHANKREEIASVGAGQIVAVMGLKDTKTGHTLSDPQHQVVLESMTFPAPVIEVAIEPKTKSDQEKLGTAIQRLSDEDPTFTVKSDEETGQTIIAGMGELHLEILVDRMRREFRVEATVGKPQVAYRETIRRKVENHSYTHKKQTGGSGQFAKVIISLEPSIDPETNTGAGYEFVNNVSGGRVPREYIPSVDQGAQEAMEFGVLAGYPMVDVKVTLEDGAYHDVDSSELAFKIAGNQAFKEAARQAKPVLLEPMFAVEVTTPETFLGTVIGDINSRRGHIQAQEERHGDMVISALVPLSEMFGYVGDLRSKTSGQASYSMEFDSYAEVPQGIADEIIKKVRGE</sequence>
<feature type="chain" id="PRO_1000074963" description="Elongation factor G">
    <location>
        <begin position="1"/>
        <end position="703"/>
    </location>
</feature>
<feature type="domain" description="tr-type G">
    <location>
        <begin position="10"/>
        <end position="286"/>
    </location>
</feature>
<feature type="binding site" evidence="1">
    <location>
        <begin position="19"/>
        <end position="26"/>
    </location>
    <ligand>
        <name>GTP</name>
        <dbReference type="ChEBI" id="CHEBI:37565"/>
    </ligand>
</feature>
<feature type="binding site" evidence="1">
    <location>
        <begin position="83"/>
        <end position="87"/>
    </location>
    <ligand>
        <name>GTP</name>
        <dbReference type="ChEBI" id="CHEBI:37565"/>
    </ligand>
</feature>
<feature type="binding site" evidence="1">
    <location>
        <begin position="137"/>
        <end position="140"/>
    </location>
    <ligand>
        <name>GTP</name>
        <dbReference type="ChEBI" id="CHEBI:37565"/>
    </ligand>
</feature>
<accession>A1SNN6</accession>
<organism>
    <name type="scientific">Nocardioides sp. (strain ATCC BAA-499 / JS614)</name>
    <dbReference type="NCBI Taxonomy" id="196162"/>
    <lineage>
        <taxon>Bacteria</taxon>
        <taxon>Bacillati</taxon>
        <taxon>Actinomycetota</taxon>
        <taxon>Actinomycetes</taxon>
        <taxon>Propionibacteriales</taxon>
        <taxon>Nocardioidaceae</taxon>
        <taxon>Nocardioides</taxon>
    </lineage>
</organism>
<comment type="function">
    <text evidence="1">Catalyzes the GTP-dependent ribosomal translocation step during translation elongation. During this step, the ribosome changes from the pre-translocational (PRE) to the post-translocational (POST) state as the newly formed A-site-bound peptidyl-tRNA and P-site-bound deacylated tRNA move to the P and E sites, respectively. Catalyzes the coordinated movement of the two tRNA molecules, the mRNA and conformational changes in the ribosome.</text>
</comment>
<comment type="subcellular location">
    <subcellularLocation>
        <location evidence="1">Cytoplasm</location>
    </subcellularLocation>
</comment>
<comment type="similarity">
    <text evidence="1">Belongs to the TRAFAC class translation factor GTPase superfamily. Classic translation factor GTPase family. EF-G/EF-2 subfamily.</text>
</comment>